<accession>A4QJJ3</accession>
<organism>
    <name type="scientific">Aethionema grandiflorum</name>
    <name type="common">Persian stone-cress</name>
    <dbReference type="NCBI Taxonomy" id="72657"/>
    <lineage>
        <taxon>Eukaryota</taxon>
        <taxon>Viridiplantae</taxon>
        <taxon>Streptophyta</taxon>
        <taxon>Embryophyta</taxon>
        <taxon>Tracheophyta</taxon>
        <taxon>Spermatophyta</taxon>
        <taxon>Magnoliopsida</taxon>
        <taxon>eudicotyledons</taxon>
        <taxon>Gunneridae</taxon>
        <taxon>Pentapetalae</taxon>
        <taxon>rosids</taxon>
        <taxon>malvids</taxon>
        <taxon>Brassicales</taxon>
        <taxon>Brassicaceae</taxon>
        <taxon>Aethionemeae</taxon>
        <taxon>Aethionema</taxon>
    </lineage>
</organism>
<name>PSBM_AETGR</name>
<comment type="function">
    <text evidence="1">One of the components of the core complex of photosystem II (PSII). PSII is a light-driven water:plastoquinone oxidoreductase that uses light energy to abstract electrons from H(2)O, generating O(2) and a proton gradient subsequently used for ATP formation. It consists of a core antenna complex that captures photons, and an electron transfer chain that converts photonic excitation into a charge separation. This subunit is found at the monomer-monomer interface.</text>
</comment>
<comment type="subunit">
    <text evidence="1">PSII is composed of 1 copy each of membrane proteins PsbA, PsbB, PsbC, PsbD, PsbE, PsbF, PsbH, PsbI, PsbJ, PsbK, PsbL, PsbM, PsbT, PsbX, PsbY, PsbZ, Psb30/Ycf12, at least 3 peripheral proteins of the oxygen-evolving complex and a large number of cofactors. It forms dimeric complexes.</text>
</comment>
<comment type="subcellular location">
    <subcellularLocation>
        <location evidence="1">Plastid</location>
        <location evidence="1">Chloroplast thylakoid membrane</location>
        <topology evidence="1">Single-pass membrane protein</topology>
    </subcellularLocation>
</comment>
<comment type="similarity">
    <text evidence="1">Belongs to the PsbM family.</text>
</comment>
<sequence>MEVNILAFIATALFILIPTAFLLIIYVKTVSQND</sequence>
<gene>
    <name evidence="1" type="primary">psbM</name>
</gene>
<reference key="1">
    <citation type="submission" date="2007-03" db="EMBL/GenBank/DDBJ databases">
        <title>Sequencing analysis of Aethionema grandiflorum chloroplast DNA.</title>
        <authorList>
            <person name="Hosouchi T."/>
            <person name="Tsuruoka H."/>
            <person name="Kotani H."/>
        </authorList>
    </citation>
    <scope>NUCLEOTIDE SEQUENCE [LARGE SCALE GENOMIC DNA]</scope>
</reference>
<protein>
    <recommendedName>
        <fullName evidence="1">Photosystem II reaction center protein M</fullName>
        <shortName evidence="1">PSII-M</shortName>
    </recommendedName>
</protein>
<dbReference type="EMBL" id="AP009367">
    <property type="protein sequence ID" value="BAF49848.1"/>
    <property type="molecule type" value="Genomic_DNA"/>
</dbReference>
<dbReference type="RefSeq" id="YP_001123024.1">
    <property type="nucleotide sequence ID" value="NC_009266.1"/>
</dbReference>
<dbReference type="SMR" id="A4QJJ3"/>
<dbReference type="GeneID" id="4962286"/>
<dbReference type="GO" id="GO:0009535">
    <property type="term" value="C:chloroplast thylakoid membrane"/>
    <property type="evidence" value="ECO:0007669"/>
    <property type="project" value="UniProtKB-SubCell"/>
</dbReference>
<dbReference type="GO" id="GO:0009523">
    <property type="term" value="C:photosystem II"/>
    <property type="evidence" value="ECO:0007669"/>
    <property type="project" value="UniProtKB-KW"/>
</dbReference>
<dbReference type="GO" id="GO:0019684">
    <property type="term" value="P:photosynthesis, light reaction"/>
    <property type="evidence" value="ECO:0007669"/>
    <property type="project" value="InterPro"/>
</dbReference>
<dbReference type="HAMAP" id="MF_00438">
    <property type="entry name" value="PSII_PsbM"/>
    <property type="match status" value="1"/>
</dbReference>
<dbReference type="InterPro" id="IPR007826">
    <property type="entry name" value="PSII_PsbM"/>
</dbReference>
<dbReference type="InterPro" id="IPR037269">
    <property type="entry name" value="PSII_PsbM_sf"/>
</dbReference>
<dbReference type="NCBIfam" id="TIGR03038">
    <property type="entry name" value="PS_II_psbM"/>
    <property type="match status" value="1"/>
</dbReference>
<dbReference type="PANTHER" id="PTHR35774">
    <property type="entry name" value="PHOTOSYSTEM II REACTION CENTER PROTEIN M"/>
    <property type="match status" value="1"/>
</dbReference>
<dbReference type="PANTHER" id="PTHR35774:SF1">
    <property type="entry name" value="PHOTOSYSTEM II REACTION CENTER PROTEIN M"/>
    <property type="match status" value="1"/>
</dbReference>
<dbReference type="Pfam" id="PF05151">
    <property type="entry name" value="PsbM"/>
    <property type="match status" value="1"/>
</dbReference>
<dbReference type="SUPFAM" id="SSF161033">
    <property type="entry name" value="Photosystem II reaction center protein M, PsbM"/>
    <property type="match status" value="1"/>
</dbReference>
<feature type="chain" id="PRO_0000325717" description="Photosystem II reaction center protein M">
    <location>
        <begin position="1"/>
        <end position="34"/>
    </location>
</feature>
<feature type="transmembrane region" description="Helical" evidence="1">
    <location>
        <begin position="5"/>
        <end position="25"/>
    </location>
</feature>
<keyword id="KW-0150">Chloroplast</keyword>
<keyword id="KW-0472">Membrane</keyword>
<keyword id="KW-0602">Photosynthesis</keyword>
<keyword id="KW-0604">Photosystem II</keyword>
<keyword id="KW-0934">Plastid</keyword>
<keyword id="KW-0674">Reaction center</keyword>
<keyword id="KW-0793">Thylakoid</keyword>
<keyword id="KW-0812">Transmembrane</keyword>
<keyword id="KW-1133">Transmembrane helix</keyword>
<evidence type="ECO:0000255" key="1">
    <source>
        <dbReference type="HAMAP-Rule" id="MF_00438"/>
    </source>
</evidence>
<proteinExistence type="inferred from homology"/>
<geneLocation type="chloroplast"/>